<name>XYLA_PSEU2</name>
<dbReference type="EC" id="5.3.1.5" evidence="1"/>
<dbReference type="EMBL" id="CP000075">
    <property type="protein sequence ID" value="AAY37917.1"/>
    <property type="molecule type" value="Genomic_DNA"/>
</dbReference>
<dbReference type="RefSeq" id="WP_003400879.1">
    <property type="nucleotide sequence ID" value="NC_007005.1"/>
</dbReference>
<dbReference type="RefSeq" id="YP_235955.1">
    <property type="nucleotide sequence ID" value="NC_007005.1"/>
</dbReference>
<dbReference type="SMR" id="Q4ZSF5"/>
<dbReference type="STRING" id="205918.Psyr_2883"/>
<dbReference type="KEGG" id="psb:Psyr_2883"/>
<dbReference type="PATRIC" id="fig|205918.7.peg.2939"/>
<dbReference type="eggNOG" id="COG2115">
    <property type="taxonomic scope" value="Bacteria"/>
</dbReference>
<dbReference type="HOGENOM" id="CLU_037261_1_0_6"/>
<dbReference type="OrthoDB" id="9763981at2"/>
<dbReference type="Proteomes" id="UP000000426">
    <property type="component" value="Chromosome"/>
</dbReference>
<dbReference type="GO" id="GO:0005737">
    <property type="term" value="C:cytoplasm"/>
    <property type="evidence" value="ECO:0007669"/>
    <property type="project" value="UniProtKB-SubCell"/>
</dbReference>
<dbReference type="GO" id="GO:0000287">
    <property type="term" value="F:magnesium ion binding"/>
    <property type="evidence" value="ECO:0007669"/>
    <property type="project" value="UniProtKB-UniRule"/>
</dbReference>
<dbReference type="GO" id="GO:0009045">
    <property type="term" value="F:xylose isomerase activity"/>
    <property type="evidence" value="ECO:0007669"/>
    <property type="project" value="UniProtKB-UniRule"/>
</dbReference>
<dbReference type="GO" id="GO:0042732">
    <property type="term" value="P:D-xylose metabolic process"/>
    <property type="evidence" value="ECO:0007669"/>
    <property type="project" value="UniProtKB-UniRule"/>
</dbReference>
<dbReference type="FunFam" id="3.20.20.150:FF:000002">
    <property type="entry name" value="Xylose isomerase"/>
    <property type="match status" value="1"/>
</dbReference>
<dbReference type="Gene3D" id="3.20.20.150">
    <property type="entry name" value="Divalent-metal-dependent TIM barrel enzymes"/>
    <property type="match status" value="1"/>
</dbReference>
<dbReference type="HAMAP" id="MF_00455">
    <property type="entry name" value="Xylose_isom_A"/>
    <property type="match status" value="1"/>
</dbReference>
<dbReference type="InterPro" id="IPR036237">
    <property type="entry name" value="Xyl_isomerase-like_sf"/>
</dbReference>
<dbReference type="InterPro" id="IPR013452">
    <property type="entry name" value="Xylose_isom_bac"/>
</dbReference>
<dbReference type="InterPro" id="IPR001998">
    <property type="entry name" value="Xylose_isomerase"/>
</dbReference>
<dbReference type="NCBIfam" id="NF003998">
    <property type="entry name" value="PRK05474.1"/>
    <property type="match status" value="1"/>
</dbReference>
<dbReference type="NCBIfam" id="TIGR02630">
    <property type="entry name" value="xylose_isom_A"/>
    <property type="match status" value="1"/>
</dbReference>
<dbReference type="PANTHER" id="PTHR48408">
    <property type="match status" value="1"/>
</dbReference>
<dbReference type="PANTHER" id="PTHR48408:SF1">
    <property type="entry name" value="XYLOSE ISOMERASE"/>
    <property type="match status" value="1"/>
</dbReference>
<dbReference type="PRINTS" id="PR00688">
    <property type="entry name" value="XYLOSISMRASE"/>
</dbReference>
<dbReference type="SUPFAM" id="SSF51658">
    <property type="entry name" value="Xylose isomerase-like"/>
    <property type="match status" value="1"/>
</dbReference>
<dbReference type="PROSITE" id="PS51415">
    <property type="entry name" value="XYLOSE_ISOMERASE"/>
    <property type="match status" value="1"/>
</dbReference>
<feature type="chain" id="PRO_0000236968" description="Xylose isomerase">
    <location>
        <begin position="1"/>
        <end position="438"/>
    </location>
</feature>
<feature type="active site" evidence="1">
    <location>
        <position position="100"/>
    </location>
</feature>
<feature type="active site" evidence="1">
    <location>
        <position position="103"/>
    </location>
</feature>
<feature type="binding site" evidence="1">
    <location>
        <position position="231"/>
    </location>
    <ligand>
        <name>Mg(2+)</name>
        <dbReference type="ChEBI" id="CHEBI:18420"/>
        <label>1</label>
    </ligand>
</feature>
<feature type="binding site" evidence="1">
    <location>
        <position position="267"/>
    </location>
    <ligand>
        <name>Mg(2+)</name>
        <dbReference type="ChEBI" id="CHEBI:18420"/>
        <label>1</label>
    </ligand>
</feature>
<feature type="binding site" evidence="1">
    <location>
        <position position="267"/>
    </location>
    <ligand>
        <name>Mg(2+)</name>
        <dbReference type="ChEBI" id="CHEBI:18420"/>
        <label>2</label>
    </ligand>
</feature>
<feature type="binding site" evidence="1">
    <location>
        <position position="270"/>
    </location>
    <ligand>
        <name>Mg(2+)</name>
        <dbReference type="ChEBI" id="CHEBI:18420"/>
        <label>2</label>
    </ligand>
</feature>
<feature type="binding site" evidence="1">
    <location>
        <position position="295"/>
    </location>
    <ligand>
        <name>Mg(2+)</name>
        <dbReference type="ChEBI" id="CHEBI:18420"/>
        <label>1</label>
    </ligand>
</feature>
<feature type="binding site" evidence="1">
    <location>
        <position position="306"/>
    </location>
    <ligand>
        <name>Mg(2+)</name>
        <dbReference type="ChEBI" id="CHEBI:18420"/>
        <label>2</label>
    </ligand>
</feature>
<feature type="binding site" evidence="1">
    <location>
        <position position="308"/>
    </location>
    <ligand>
        <name>Mg(2+)</name>
        <dbReference type="ChEBI" id="CHEBI:18420"/>
        <label>2</label>
    </ligand>
</feature>
<feature type="binding site" evidence="1">
    <location>
        <position position="338"/>
    </location>
    <ligand>
        <name>Mg(2+)</name>
        <dbReference type="ChEBI" id="CHEBI:18420"/>
        <label>1</label>
    </ligand>
</feature>
<reference key="1">
    <citation type="journal article" date="2005" name="Proc. Natl. Acad. Sci. U.S.A.">
        <title>Comparison of the complete genome sequences of Pseudomonas syringae pv. syringae B728a and pv. tomato DC3000.</title>
        <authorList>
            <person name="Feil H."/>
            <person name="Feil W.S."/>
            <person name="Chain P."/>
            <person name="Larimer F."/>
            <person name="Dibartolo G."/>
            <person name="Copeland A."/>
            <person name="Lykidis A."/>
            <person name="Trong S."/>
            <person name="Nolan M."/>
            <person name="Goltsman E."/>
            <person name="Thiel J."/>
            <person name="Malfatti S."/>
            <person name="Loper J.E."/>
            <person name="Lapidus A."/>
            <person name="Detter J.C."/>
            <person name="Land M."/>
            <person name="Richardson P.M."/>
            <person name="Kyrpides N.C."/>
            <person name="Ivanova N."/>
            <person name="Lindow S.E."/>
        </authorList>
    </citation>
    <scope>NUCLEOTIDE SEQUENCE [LARGE SCALE GENOMIC DNA]</scope>
    <source>
        <strain>B728a</strain>
    </source>
</reference>
<comment type="catalytic activity">
    <reaction evidence="1">
        <text>alpha-D-xylose = alpha-D-xylulofuranose</text>
        <dbReference type="Rhea" id="RHEA:22816"/>
        <dbReference type="ChEBI" id="CHEBI:28518"/>
        <dbReference type="ChEBI" id="CHEBI:188998"/>
        <dbReference type="EC" id="5.3.1.5"/>
    </reaction>
</comment>
<comment type="cofactor">
    <cofactor evidence="1">
        <name>Mg(2+)</name>
        <dbReference type="ChEBI" id="CHEBI:18420"/>
    </cofactor>
    <text evidence="1">Binds 2 magnesium ions per subunit.</text>
</comment>
<comment type="subunit">
    <text evidence="1">Homotetramer.</text>
</comment>
<comment type="subcellular location">
    <subcellularLocation>
        <location evidence="1">Cytoplasm</location>
    </subcellularLocation>
</comment>
<comment type="similarity">
    <text evidence="1">Belongs to the xylose isomerase family.</text>
</comment>
<proteinExistence type="inferred from homology"/>
<sequence>MPYFPDVDRVRYEGPDSDSPLAFRHYDADKLVLGKPMREHLRMAACYWHTFVWPGADMFGVGTFKRPWQGSGDPMELAIGKAEAAFEFFSKLGIDYYSFHDTDVAPEGASLKEYRHNFAHMVDHLERHQQQSGIKLLWGTANCFSNPRFAAGAASNPDPEVFAYAATQVFSAMNATQRLKGSNYVLWGGREGYETLLNTDLKREREQLGRFMRMVVEHKHKIGFKGDLLIEPKPQEPTKHQYDYDSATVFGFLQQYGLENEIKVNIEANHATLAGHSFHHEIATAVSLGIFGSIDANRGDPQNGWDTDQFPNSVEEMTLATYEILKAGGFTNGGFNFDSKVRRQSLDDIDLFHGHVAAMDVLALALERAAAMLQNDKLQHFKDQRYAGWQQPFGQSVLAGEFSLASLAEHAFANELNPQAVSGRQELLEGVVNRFIYA</sequence>
<keyword id="KW-0119">Carbohydrate metabolism</keyword>
<keyword id="KW-0963">Cytoplasm</keyword>
<keyword id="KW-0413">Isomerase</keyword>
<keyword id="KW-0460">Magnesium</keyword>
<keyword id="KW-0479">Metal-binding</keyword>
<keyword id="KW-0859">Xylose metabolism</keyword>
<gene>
    <name evidence="1" type="primary">xylA</name>
    <name type="ordered locus">Psyr_2883</name>
</gene>
<accession>Q4ZSF5</accession>
<evidence type="ECO:0000255" key="1">
    <source>
        <dbReference type="HAMAP-Rule" id="MF_00455"/>
    </source>
</evidence>
<protein>
    <recommendedName>
        <fullName evidence="1">Xylose isomerase</fullName>
        <ecNumber evidence="1">5.3.1.5</ecNumber>
    </recommendedName>
</protein>
<organism>
    <name type="scientific">Pseudomonas syringae pv. syringae (strain B728a)</name>
    <dbReference type="NCBI Taxonomy" id="205918"/>
    <lineage>
        <taxon>Bacteria</taxon>
        <taxon>Pseudomonadati</taxon>
        <taxon>Pseudomonadota</taxon>
        <taxon>Gammaproteobacteria</taxon>
        <taxon>Pseudomonadales</taxon>
        <taxon>Pseudomonadaceae</taxon>
        <taxon>Pseudomonas</taxon>
        <taxon>Pseudomonas syringae</taxon>
    </lineage>
</organism>